<gene>
    <name evidence="1" type="primary">asnS</name>
    <name type="ordered locus">Sfri_2169</name>
</gene>
<evidence type="ECO:0000255" key="1">
    <source>
        <dbReference type="HAMAP-Rule" id="MF_00534"/>
    </source>
</evidence>
<accession>Q081Q0</accession>
<feature type="chain" id="PRO_1000051423" description="Asparagine--tRNA ligase">
    <location>
        <begin position="1"/>
        <end position="466"/>
    </location>
</feature>
<protein>
    <recommendedName>
        <fullName evidence="1">Asparagine--tRNA ligase</fullName>
        <ecNumber evidence="1">6.1.1.22</ecNumber>
    </recommendedName>
    <alternativeName>
        <fullName evidence="1">Asparaginyl-tRNA synthetase</fullName>
        <shortName evidence="1">AsnRS</shortName>
    </alternativeName>
</protein>
<reference key="1">
    <citation type="submission" date="2006-08" db="EMBL/GenBank/DDBJ databases">
        <title>Complete sequence of Shewanella frigidimarina NCIMB 400.</title>
        <authorList>
            <consortium name="US DOE Joint Genome Institute"/>
            <person name="Copeland A."/>
            <person name="Lucas S."/>
            <person name="Lapidus A."/>
            <person name="Barry K."/>
            <person name="Detter J.C."/>
            <person name="Glavina del Rio T."/>
            <person name="Hammon N."/>
            <person name="Israni S."/>
            <person name="Dalin E."/>
            <person name="Tice H."/>
            <person name="Pitluck S."/>
            <person name="Fredrickson J.K."/>
            <person name="Kolker E."/>
            <person name="McCuel L.A."/>
            <person name="DiChristina T."/>
            <person name="Nealson K.H."/>
            <person name="Newman D."/>
            <person name="Tiedje J.M."/>
            <person name="Zhou J."/>
            <person name="Romine M.F."/>
            <person name="Culley D.E."/>
            <person name="Serres M."/>
            <person name="Chertkov O."/>
            <person name="Brettin T."/>
            <person name="Bruce D."/>
            <person name="Han C."/>
            <person name="Tapia R."/>
            <person name="Gilna P."/>
            <person name="Schmutz J."/>
            <person name="Larimer F."/>
            <person name="Land M."/>
            <person name="Hauser L."/>
            <person name="Kyrpides N."/>
            <person name="Mikhailova N."/>
            <person name="Richardson P."/>
        </authorList>
    </citation>
    <scope>NUCLEOTIDE SEQUENCE [LARGE SCALE GENOMIC DNA]</scope>
    <source>
        <strain>NCIMB 400</strain>
    </source>
</reference>
<proteinExistence type="inferred from homology"/>
<dbReference type="EC" id="6.1.1.22" evidence="1"/>
<dbReference type="EMBL" id="CP000447">
    <property type="protein sequence ID" value="ABI72015.1"/>
    <property type="molecule type" value="Genomic_DNA"/>
</dbReference>
<dbReference type="RefSeq" id="WP_011637625.1">
    <property type="nucleotide sequence ID" value="NC_008345.1"/>
</dbReference>
<dbReference type="SMR" id="Q081Q0"/>
<dbReference type="STRING" id="318167.Sfri_2169"/>
<dbReference type="KEGG" id="sfr:Sfri_2169"/>
<dbReference type="eggNOG" id="COG0017">
    <property type="taxonomic scope" value="Bacteria"/>
</dbReference>
<dbReference type="HOGENOM" id="CLU_004553_2_0_6"/>
<dbReference type="OrthoDB" id="9762036at2"/>
<dbReference type="Proteomes" id="UP000000684">
    <property type="component" value="Chromosome"/>
</dbReference>
<dbReference type="GO" id="GO:0005737">
    <property type="term" value="C:cytoplasm"/>
    <property type="evidence" value="ECO:0007669"/>
    <property type="project" value="UniProtKB-SubCell"/>
</dbReference>
<dbReference type="GO" id="GO:0004816">
    <property type="term" value="F:asparagine-tRNA ligase activity"/>
    <property type="evidence" value="ECO:0007669"/>
    <property type="project" value="UniProtKB-UniRule"/>
</dbReference>
<dbReference type="GO" id="GO:0005524">
    <property type="term" value="F:ATP binding"/>
    <property type="evidence" value="ECO:0007669"/>
    <property type="project" value="UniProtKB-UniRule"/>
</dbReference>
<dbReference type="GO" id="GO:0003676">
    <property type="term" value="F:nucleic acid binding"/>
    <property type="evidence" value="ECO:0007669"/>
    <property type="project" value="InterPro"/>
</dbReference>
<dbReference type="GO" id="GO:0006421">
    <property type="term" value="P:asparaginyl-tRNA aminoacylation"/>
    <property type="evidence" value="ECO:0007669"/>
    <property type="project" value="UniProtKB-UniRule"/>
</dbReference>
<dbReference type="CDD" id="cd00776">
    <property type="entry name" value="AsxRS_core"/>
    <property type="match status" value="1"/>
</dbReference>
<dbReference type="CDD" id="cd04318">
    <property type="entry name" value="EcAsnRS_like_N"/>
    <property type="match status" value="1"/>
</dbReference>
<dbReference type="FunFam" id="3.30.930.10:FF:000016">
    <property type="entry name" value="Asparagine--tRNA ligase"/>
    <property type="match status" value="1"/>
</dbReference>
<dbReference type="Gene3D" id="3.30.930.10">
    <property type="entry name" value="Bira Bifunctional Protein, Domain 2"/>
    <property type="match status" value="1"/>
</dbReference>
<dbReference type="Gene3D" id="2.40.50.140">
    <property type="entry name" value="Nucleic acid-binding proteins"/>
    <property type="match status" value="1"/>
</dbReference>
<dbReference type="HAMAP" id="MF_00534">
    <property type="entry name" value="Asn_tRNA_synth"/>
    <property type="match status" value="1"/>
</dbReference>
<dbReference type="InterPro" id="IPR004364">
    <property type="entry name" value="Aa-tRNA-synt_II"/>
</dbReference>
<dbReference type="InterPro" id="IPR006195">
    <property type="entry name" value="aa-tRNA-synth_II"/>
</dbReference>
<dbReference type="InterPro" id="IPR045864">
    <property type="entry name" value="aa-tRNA-synth_II/BPL/LPL"/>
</dbReference>
<dbReference type="InterPro" id="IPR004522">
    <property type="entry name" value="Asn-tRNA-ligase"/>
</dbReference>
<dbReference type="InterPro" id="IPR002312">
    <property type="entry name" value="Asp/Asn-tRNA-synth_IIb"/>
</dbReference>
<dbReference type="InterPro" id="IPR012340">
    <property type="entry name" value="NA-bd_OB-fold"/>
</dbReference>
<dbReference type="InterPro" id="IPR004365">
    <property type="entry name" value="NA-bd_OB_tRNA"/>
</dbReference>
<dbReference type="NCBIfam" id="TIGR00457">
    <property type="entry name" value="asnS"/>
    <property type="match status" value="1"/>
</dbReference>
<dbReference type="NCBIfam" id="NF003037">
    <property type="entry name" value="PRK03932.1"/>
    <property type="match status" value="1"/>
</dbReference>
<dbReference type="PANTHER" id="PTHR22594:SF34">
    <property type="entry name" value="ASPARAGINE--TRNA LIGASE, MITOCHONDRIAL-RELATED"/>
    <property type="match status" value="1"/>
</dbReference>
<dbReference type="PANTHER" id="PTHR22594">
    <property type="entry name" value="ASPARTYL/LYSYL-TRNA SYNTHETASE"/>
    <property type="match status" value="1"/>
</dbReference>
<dbReference type="Pfam" id="PF00152">
    <property type="entry name" value="tRNA-synt_2"/>
    <property type="match status" value="1"/>
</dbReference>
<dbReference type="Pfam" id="PF01336">
    <property type="entry name" value="tRNA_anti-codon"/>
    <property type="match status" value="1"/>
</dbReference>
<dbReference type="PRINTS" id="PR01042">
    <property type="entry name" value="TRNASYNTHASP"/>
</dbReference>
<dbReference type="SUPFAM" id="SSF55681">
    <property type="entry name" value="Class II aaRS and biotin synthetases"/>
    <property type="match status" value="1"/>
</dbReference>
<dbReference type="SUPFAM" id="SSF50249">
    <property type="entry name" value="Nucleic acid-binding proteins"/>
    <property type="match status" value="1"/>
</dbReference>
<dbReference type="PROSITE" id="PS50862">
    <property type="entry name" value="AA_TRNA_LIGASE_II"/>
    <property type="match status" value="1"/>
</dbReference>
<keyword id="KW-0030">Aminoacyl-tRNA synthetase</keyword>
<keyword id="KW-0067">ATP-binding</keyword>
<keyword id="KW-0963">Cytoplasm</keyword>
<keyword id="KW-0436">Ligase</keyword>
<keyword id="KW-0547">Nucleotide-binding</keyword>
<keyword id="KW-0648">Protein biosynthesis</keyword>
<keyword id="KW-1185">Reference proteome</keyword>
<sequence length="466" mass="52142">MSIASVASVFKGEHAVGSQVTVRGWVRTRRDSKAGISFLAVYDGSCFDPIQGVLPNSLANYNDDVLKLTAGCSVVMTGEVVASPGAGQAFELQVTEIVVTGFVDDPDTYPMSAKRHSIEHLRELAHLRPRTNIIGAVARVRNCLSQAIHRFYHQEGFIWVSTPLITASDCEGAGEMFRVSTLDMENLPRTAEGKVDYDKDFFGKESFLTVSGQLNAETYACALSKVYTFGPTFRAENSNTTRHLAEFWMVEPEVAFATLDDAAELAEKMLKFAFSAVLEERMDDLNFFNERVDKTVIERLQAFVSSDFAQVDYTDAVEILKNCGKKFEFAVEWGIDLQSEHERYLAEEHFKAPVVVKNYPKDIKAFYMRLNDDGKTVAAMDVLAPGIGEIIGGAQREERLDVLDARLAEMDLSQEDYWWYRDLRRYGTVPHSGFGLGFERLVSYVTGVNNIRDVIPFPRAPRSASF</sequence>
<name>SYN_SHEFN</name>
<comment type="catalytic activity">
    <reaction evidence="1">
        <text>tRNA(Asn) + L-asparagine + ATP = L-asparaginyl-tRNA(Asn) + AMP + diphosphate + H(+)</text>
        <dbReference type="Rhea" id="RHEA:11180"/>
        <dbReference type="Rhea" id="RHEA-COMP:9659"/>
        <dbReference type="Rhea" id="RHEA-COMP:9674"/>
        <dbReference type="ChEBI" id="CHEBI:15378"/>
        <dbReference type="ChEBI" id="CHEBI:30616"/>
        <dbReference type="ChEBI" id="CHEBI:33019"/>
        <dbReference type="ChEBI" id="CHEBI:58048"/>
        <dbReference type="ChEBI" id="CHEBI:78442"/>
        <dbReference type="ChEBI" id="CHEBI:78515"/>
        <dbReference type="ChEBI" id="CHEBI:456215"/>
        <dbReference type="EC" id="6.1.1.22"/>
    </reaction>
</comment>
<comment type="subunit">
    <text evidence="1">Homodimer.</text>
</comment>
<comment type="subcellular location">
    <subcellularLocation>
        <location evidence="1">Cytoplasm</location>
    </subcellularLocation>
</comment>
<comment type="similarity">
    <text evidence="1">Belongs to the class-II aminoacyl-tRNA synthetase family.</text>
</comment>
<organism>
    <name type="scientific">Shewanella frigidimarina (strain NCIMB 400)</name>
    <dbReference type="NCBI Taxonomy" id="318167"/>
    <lineage>
        <taxon>Bacteria</taxon>
        <taxon>Pseudomonadati</taxon>
        <taxon>Pseudomonadota</taxon>
        <taxon>Gammaproteobacteria</taxon>
        <taxon>Alteromonadales</taxon>
        <taxon>Shewanellaceae</taxon>
        <taxon>Shewanella</taxon>
    </lineage>
</organism>